<sequence>MSEVNLSGMTALSIGRGVTLNNASELEAALRHIGATRYHNHHPFHKLLHSGKLNKGQVQAWALNRYYYQSTIPLKDAMVMTRFRDRATRLEWRHRIEDHDGDVGTEGGIERWIKLTEGLGLDTAYVESTEGILPATRFAVEAYVHFCRDRSPLEAIASSLTELFAPSIHEERISGMLEHYSFVNNDTMSYFKRRLTQAPRDANFALHYVREHATTPEQRAAVCNALIFKTNVLWVQLDALYHAYVEGHIPPGAFVPKEG</sequence>
<comment type="function">
    <text evidence="1">Ring cyclization and eight-electron oxidation of 3a-(2-amino-2-carboxyethyl)-4,5-dioxo-4,5,6,7,8,9-hexahydroquinoline-7,9-dicarboxylic-acid to PQQ.</text>
</comment>
<comment type="catalytic activity">
    <reaction evidence="1">
        <text>6-(2-amino-2-carboxyethyl)-7,8-dioxo-1,2,3,4,7,8-hexahydroquinoline-2,4-dicarboxylate + 3 O2 = pyrroloquinoline quinone + 2 H2O2 + 2 H2O + H(+)</text>
        <dbReference type="Rhea" id="RHEA:10692"/>
        <dbReference type="ChEBI" id="CHEBI:15377"/>
        <dbReference type="ChEBI" id="CHEBI:15378"/>
        <dbReference type="ChEBI" id="CHEBI:15379"/>
        <dbReference type="ChEBI" id="CHEBI:16240"/>
        <dbReference type="ChEBI" id="CHEBI:58442"/>
        <dbReference type="ChEBI" id="CHEBI:58778"/>
        <dbReference type="EC" id="1.3.3.11"/>
    </reaction>
</comment>
<comment type="pathway">
    <text evidence="1">Cofactor biosynthesis; pyrroloquinoline quinone biosynthesis.</text>
</comment>
<comment type="similarity">
    <text evidence="1">Belongs to the PqqC family.</text>
</comment>
<protein>
    <recommendedName>
        <fullName evidence="1">Pyrroloquinoline-quinone synthase</fullName>
        <ecNumber evidence="1">1.3.3.11</ecNumber>
    </recommendedName>
    <alternativeName>
        <fullName evidence="1">Coenzyme PQQ synthesis protein C</fullName>
    </alternativeName>
    <alternativeName>
        <fullName evidence="1">Pyrroloquinoline quinone biosynthesis protein C</fullName>
    </alternativeName>
</protein>
<organism>
    <name type="scientific">Bradyrhizobium sp. (strain ORS 278)</name>
    <dbReference type="NCBI Taxonomy" id="114615"/>
    <lineage>
        <taxon>Bacteria</taxon>
        <taxon>Pseudomonadati</taxon>
        <taxon>Pseudomonadota</taxon>
        <taxon>Alphaproteobacteria</taxon>
        <taxon>Hyphomicrobiales</taxon>
        <taxon>Nitrobacteraceae</taxon>
        <taxon>Bradyrhizobium</taxon>
    </lineage>
</organism>
<reference key="1">
    <citation type="journal article" date="2007" name="Science">
        <title>Legumes symbioses: absence of nod genes in photosynthetic bradyrhizobia.</title>
        <authorList>
            <person name="Giraud E."/>
            <person name="Moulin L."/>
            <person name="Vallenet D."/>
            <person name="Barbe V."/>
            <person name="Cytryn E."/>
            <person name="Avarre J.-C."/>
            <person name="Jaubert M."/>
            <person name="Simon D."/>
            <person name="Cartieaux F."/>
            <person name="Prin Y."/>
            <person name="Bena G."/>
            <person name="Hannibal L."/>
            <person name="Fardoux J."/>
            <person name="Kojadinovic M."/>
            <person name="Vuillet L."/>
            <person name="Lajus A."/>
            <person name="Cruveiller S."/>
            <person name="Rouy Z."/>
            <person name="Mangenot S."/>
            <person name="Segurens B."/>
            <person name="Dossat C."/>
            <person name="Franck W.L."/>
            <person name="Chang W.-S."/>
            <person name="Saunders E."/>
            <person name="Bruce D."/>
            <person name="Richardson P."/>
            <person name="Normand P."/>
            <person name="Dreyfus B."/>
            <person name="Pignol D."/>
            <person name="Stacey G."/>
            <person name="Emerich D."/>
            <person name="Vermeglio A."/>
            <person name="Medigue C."/>
            <person name="Sadowsky M."/>
        </authorList>
    </citation>
    <scope>NUCLEOTIDE SEQUENCE [LARGE SCALE GENOMIC DNA]</scope>
    <source>
        <strain>ORS 278</strain>
    </source>
</reference>
<feature type="chain" id="PRO_1000061667" description="Pyrroloquinoline-quinone synthase">
    <location>
        <begin position="1"/>
        <end position="259"/>
    </location>
</feature>
<accession>A4YZY5</accession>
<dbReference type="EC" id="1.3.3.11" evidence="1"/>
<dbReference type="EMBL" id="CU234118">
    <property type="protein sequence ID" value="CAL79461.1"/>
    <property type="molecule type" value="Genomic_DNA"/>
</dbReference>
<dbReference type="SMR" id="A4YZY5"/>
<dbReference type="STRING" id="114615.BRADO5795"/>
<dbReference type="KEGG" id="bra:BRADO5795"/>
<dbReference type="eggNOG" id="COG5424">
    <property type="taxonomic scope" value="Bacteria"/>
</dbReference>
<dbReference type="HOGENOM" id="CLU_080136_0_0_5"/>
<dbReference type="OrthoDB" id="9800756at2"/>
<dbReference type="UniPathway" id="UPA00539"/>
<dbReference type="Proteomes" id="UP000001994">
    <property type="component" value="Chromosome"/>
</dbReference>
<dbReference type="GO" id="GO:0033732">
    <property type="term" value="F:pyrroloquinoline-quinone synthase activity"/>
    <property type="evidence" value="ECO:0007669"/>
    <property type="project" value="UniProtKB-EC"/>
</dbReference>
<dbReference type="GO" id="GO:0018189">
    <property type="term" value="P:pyrroloquinoline quinone biosynthetic process"/>
    <property type="evidence" value="ECO:0007669"/>
    <property type="project" value="UniProtKB-UniRule"/>
</dbReference>
<dbReference type="GO" id="GO:0006790">
    <property type="term" value="P:sulfur compound metabolic process"/>
    <property type="evidence" value="ECO:0007669"/>
    <property type="project" value="UniProtKB-ARBA"/>
</dbReference>
<dbReference type="Gene3D" id="1.20.910.10">
    <property type="entry name" value="Heme oxygenase-like"/>
    <property type="match status" value="1"/>
</dbReference>
<dbReference type="HAMAP" id="MF_00654">
    <property type="entry name" value="PQQ_syn_PqqC"/>
    <property type="match status" value="1"/>
</dbReference>
<dbReference type="InterPro" id="IPR016084">
    <property type="entry name" value="Haem_Oase-like_multi-hlx"/>
</dbReference>
<dbReference type="InterPro" id="IPR011845">
    <property type="entry name" value="PqqC"/>
</dbReference>
<dbReference type="InterPro" id="IPR039068">
    <property type="entry name" value="PqqC-like"/>
</dbReference>
<dbReference type="InterPro" id="IPR004305">
    <property type="entry name" value="Thiaminase-2/PQQC"/>
</dbReference>
<dbReference type="NCBIfam" id="TIGR02111">
    <property type="entry name" value="PQQ_syn_pqqC"/>
    <property type="match status" value="1"/>
</dbReference>
<dbReference type="PANTHER" id="PTHR40279:SF3">
    <property type="entry name" value="4-AMINOBENZOATE SYNTHASE"/>
    <property type="match status" value="1"/>
</dbReference>
<dbReference type="PANTHER" id="PTHR40279">
    <property type="entry name" value="PQQC-LIKE PROTEIN"/>
    <property type="match status" value="1"/>
</dbReference>
<dbReference type="Pfam" id="PF03070">
    <property type="entry name" value="TENA_THI-4"/>
    <property type="match status" value="1"/>
</dbReference>
<dbReference type="SUPFAM" id="SSF48613">
    <property type="entry name" value="Heme oxygenase-like"/>
    <property type="match status" value="1"/>
</dbReference>
<keyword id="KW-0560">Oxidoreductase</keyword>
<keyword id="KW-0884">PQQ biosynthesis</keyword>
<keyword id="KW-1185">Reference proteome</keyword>
<proteinExistence type="inferred from homology"/>
<gene>
    <name evidence="1" type="primary">pqqC</name>
    <name type="ordered locus">BRADO5795</name>
</gene>
<evidence type="ECO:0000255" key="1">
    <source>
        <dbReference type="HAMAP-Rule" id="MF_00654"/>
    </source>
</evidence>
<name>PQQC_BRASO</name>